<accession>Q6BPT6</accession>
<gene>
    <name type="primary">AIM32</name>
    <name type="ordered locus">DEHA2E10956g</name>
</gene>
<feature type="chain" id="PRO_0000399696" description="Altered inheritance of mitochondria protein 32">
    <location>
        <begin position="1"/>
        <end position="273"/>
    </location>
</feature>
<proteinExistence type="inferred from homology"/>
<organism>
    <name type="scientific">Debaryomyces hansenii (strain ATCC 36239 / CBS 767 / BCRC 21394 / JCM 1990 / NBRC 0083 / IGC 2968)</name>
    <name type="common">Yeast</name>
    <name type="synonym">Torulaspora hansenii</name>
    <dbReference type="NCBI Taxonomy" id="284592"/>
    <lineage>
        <taxon>Eukaryota</taxon>
        <taxon>Fungi</taxon>
        <taxon>Dikarya</taxon>
        <taxon>Ascomycota</taxon>
        <taxon>Saccharomycotina</taxon>
        <taxon>Pichiomycetes</taxon>
        <taxon>Debaryomycetaceae</taxon>
        <taxon>Debaryomyces</taxon>
    </lineage>
</organism>
<evidence type="ECO:0000305" key="1"/>
<sequence>MNIARRYLSRFVEKCPIERGCECNILSELPNDKPIDFEKNLNGTSVIPWKHLLVLSHGFNHADEWPSKLELLPGSLTNEMDLLKRKVVSPYHPIMISNAIVPNVTRGAKEKVYLYPDNKMIEFDIKDTKDFMHTYLVPPEEEMAQFEPVYNPFKKTTAITWEKKKIDFKEQDIGKDLILVCGHTQRDVRCGKIAPILVDQFKKSLKDRGLDVDVGVVSHIGGHAYAGNVIYFPSDKTKKSIWYGRVFPEKVAGIVDETVIGGNIIKELYRGEV</sequence>
<name>AIM32_DEBHA</name>
<protein>
    <recommendedName>
        <fullName>Altered inheritance of mitochondria protein 32</fullName>
    </recommendedName>
</protein>
<comment type="similarity">
    <text evidence="1">Belongs to the AIM32 family.</text>
</comment>
<dbReference type="EMBL" id="CR382137">
    <property type="protein sequence ID" value="CAG88023.2"/>
    <property type="molecule type" value="Genomic_DNA"/>
</dbReference>
<dbReference type="RefSeq" id="XP_459784.2">
    <property type="nucleotide sequence ID" value="XM_459784.1"/>
</dbReference>
<dbReference type="SMR" id="Q6BPT6"/>
<dbReference type="FunCoup" id="Q6BPT6">
    <property type="interactions" value="18"/>
</dbReference>
<dbReference type="STRING" id="284592.Q6BPT6"/>
<dbReference type="GeneID" id="2902626"/>
<dbReference type="KEGG" id="dha:DEHA2E10956g"/>
<dbReference type="VEuPathDB" id="FungiDB:DEHA2E10956g"/>
<dbReference type="eggNOG" id="ENOG502QS3W">
    <property type="taxonomic scope" value="Eukaryota"/>
</dbReference>
<dbReference type="HOGENOM" id="CLU_044499_1_0_1"/>
<dbReference type="InParanoid" id="Q6BPT6"/>
<dbReference type="OMA" id="IWYGRVF"/>
<dbReference type="OrthoDB" id="10253744at2759"/>
<dbReference type="Proteomes" id="UP000000599">
    <property type="component" value="Chromosome E"/>
</dbReference>
<dbReference type="CDD" id="cd03062">
    <property type="entry name" value="TRX_Fd_Sucrase"/>
    <property type="match status" value="1"/>
</dbReference>
<dbReference type="Gene3D" id="3.40.30.10">
    <property type="entry name" value="Glutaredoxin"/>
    <property type="match status" value="1"/>
</dbReference>
<dbReference type="InterPro" id="IPR009737">
    <property type="entry name" value="Aim32/Apd1-like"/>
</dbReference>
<dbReference type="InterPro" id="IPR036249">
    <property type="entry name" value="Thioredoxin-like_sf"/>
</dbReference>
<dbReference type="PANTHER" id="PTHR31902">
    <property type="entry name" value="ACTIN PATCHES DISTAL PROTEIN 1"/>
    <property type="match status" value="1"/>
</dbReference>
<dbReference type="PANTHER" id="PTHR31902:SF7">
    <property type="entry name" value="ALTERED INHERITANCE OF MITOCHONDRIA PROTEIN 32"/>
    <property type="match status" value="1"/>
</dbReference>
<dbReference type="Pfam" id="PF06999">
    <property type="entry name" value="Suc_Fer-like"/>
    <property type="match status" value="1"/>
</dbReference>
<dbReference type="SUPFAM" id="SSF52833">
    <property type="entry name" value="Thioredoxin-like"/>
    <property type="match status" value="1"/>
</dbReference>
<keyword id="KW-1185">Reference proteome</keyword>
<reference key="1">
    <citation type="journal article" date="2004" name="Nature">
        <title>Genome evolution in yeasts.</title>
        <authorList>
            <person name="Dujon B."/>
            <person name="Sherman D."/>
            <person name="Fischer G."/>
            <person name="Durrens P."/>
            <person name="Casaregola S."/>
            <person name="Lafontaine I."/>
            <person name="de Montigny J."/>
            <person name="Marck C."/>
            <person name="Neuveglise C."/>
            <person name="Talla E."/>
            <person name="Goffard N."/>
            <person name="Frangeul L."/>
            <person name="Aigle M."/>
            <person name="Anthouard V."/>
            <person name="Babour A."/>
            <person name="Barbe V."/>
            <person name="Barnay S."/>
            <person name="Blanchin S."/>
            <person name="Beckerich J.-M."/>
            <person name="Beyne E."/>
            <person name="Bleykasten C."/>
            <person name="Boisrame A."/>
            <person name="Boyer J."/>
            <person name="Cattolico L."/>
            <person name="Confanioleri F."/>
            <person name="de Daruvar A."/>
            <person name="Despons L."/>
            <person name="Fabre E."/>
            <person name="Fairhead C."/>
            <person name="Ferry-Dumazet H."/>
            <person name="Groppi A."/>
            <person name="Hantraye F."/>
            <person name="Hennequin C."/>
            <person name="Jauniaux N."/>
            <person name="Joyet P."/>
            <person name="Kachouri R."/>
            <person name="Kerrest A."/>
            <person name="Koszul R."/>
            <person name="Lemaire M."/>
            <person name="Lesur I."/>
            <person name="Ma L."/>
            <person name="Muller H."/>
            <person name="Nicaud J.-M."/>
            <person name="Nikolski M."/>
            <person name="Oztas S."/>
            <person name="Ozier-Kalogeropoulos O."/>
            <person name="Pellenz S."/>
            <person name="Potier S."/>
            <person name="Richard G.-F."/>
            <person name="Straub M.-L."/>
            <person name="Suleau A."/>
            <person name="Swennen D."/>
            <person name="Tekaia F."/>
            <person name="Wesolowski-Louvel M."/>
            <person name="Westhof E."/>
            <person name="Wirth B."/>
            <person name="Zeniou-Meyer M."/>
            <person name="Zivanovic Y."/>
            <person name="Bolotin-Fukuhara M."/>
            <person name="Thierry A."/>
            <person name="Bouchier C."/>
            <person name="Caudron B."/>
            <person name="Scarpelli C."/>
            <person name="Gaillardin C."/>
            <person name="Weissenbach J."/>
            <person name="Wincker P."/>
            <person name="Souciet J.-L."/>
        </authorList>
    </citation>
    <scope>NUCLEOTIDE SEQUENCE [LARGE SCALE GENOMIC DNA]</scope>
    <source>
        <strain>ATCC 36239 / CBS 767 / BCRC 21394 / JCM 1990 / NBRC 0083 / IGC 2968</strain>
    </source>
</reference>